<comment type="function">
    <text evidence="1">Is required not only for elongation of protein synthesis but also for the initiation of all mRNA translation through initiator tRNA(fMet) aminoacylation.</text>
</comment>
<comment type="catalytic activity">
    <reaction evidence="1">
        <text>tRNA(Met) + L-methionine + ATP = L-methionyl-tRNA(Met) + AMP + diphosphate</text>
        <dbReference type="Rhea" id="RHEA:13481"/>
        <dbReference type="Rhea" id="RHEA-COMP:9667"/>
        <dbReference type="Rhea" id="RHEA-COMP:9698"/>
        <dbReference type="ChEBI" id="CHEBI:30616"/>
        <dbReference type="ChEBI" id="CHEBI:33019"/>
        <dbReference type="ChEBI" id="CHEBI:57844"/>
        <dbReference type="ChEBI" id="CHEBI:78442"/>
        <dbReference type="ChEBI" id="CHEBI:78530"/>
        <dbReference type="ChEBI" id="CHEBI:456215"/>
        <dbReference type="EC" id="6.1.1.10"/>
    </reaction>
</comment>
<comment type="cofactor">
    <cofactor evidence="1">
        <name>Zn(2+)</name>
        <dbReference type="ChEBI" id="CHEBI:29105"/>
    </cofactor>
    <text evidence="1">Binds 1 zinc ion per subunit.</text>
</comment>
<comment type="subunit">
    <text evidence="1">Homodimer.</text>
</comment>
<comment type="subcellular location">
    <subcellularLocation>
        <location evidence="1">Cytoplasm</location>
    </subcellularLocation>
</comment>
<comment type="similarity">
    <text evidence="1">Belongs to the class-I aminoacyl-tRNA synthetase family. MetG type 1 subfamily.</text>
</comment>
<sequence length="685" mass="76745">MRKILVTNALPYANGPIHMGHLLGYIQADIWVRAMRAMGHDVTYVCADDAHGTAIMLRAEANGISPEKQIANVQQEHIRDFDGFGVHFDHYDSTHSAENKVRSEDIYLKNREAGNIAVRPITQLFDPEKQMFLSDRFIKGTCPKCKAEDQYGDACEVCGTTYNATELLNPRSTLSGATPVEKSSDHYFFKLPNFGEYLQKWTRDEGRLPVSIANKLDEWFEAGLADWDISRDAPYFGFEIPDAPNKYFYVWVDAPIGYMSSFENYIKAKRPELNFDDYWKKDSQNEVYHFIGKDIVYFHALFWPAMLEGANYRTPSGLFVNGFLTVNGQKMSKSRGTFIKAETYLQHLNPEYLRYYFASKLSDKVEDSDLNLDDFVQKVNSDLVGKVVNIASRCAKFINSSFNNTLSANCAEPELVQSFIDAGDSIAQAYEAREFSAAIREIMALADKANQYIDEKKPWALAKQEGQEQQVHNVCSVGINLFRQLAIYLSPVLPTLAAQVQAFLQLESFDFASRQQILLAHEIAQFQPLMQRVDPKAVAAMVDASKDSLAATAEAPKAEKKKEKKVEKKPEPKVGEAEIIGIEDFIKVDLRVALVQEAATVEGSDKLLQLTLDVGEAEPRNVFSGIREFYQPEDLKGKLVVMVANLAPRKMRFGISNGMVLAAGNGDGVWVISPDSGAKPGDKVS</sequence>
<gene>
    <name evidence="1" type="primary">metG</name>
    <name type="ordered locus">ACIAD0768</name>
</gene>
<proteinExistence type="inferred from homology"/>
<evidence type="ECO:0000255" key="1">
    <source>
        <dbReference type="HAMAP-Rule" id="MF_00098"/>
    </source>
</evidence>
<protein>
    <recommendedName>
        <fullName evidence="1">Methionine--tRNA ligase</fullName>
        <ecNumber evidence="1">6.1.1.10</ecNumber>
    </recommendedName>
    <alternativeName>
        <fullName evidence="1">Methionyl-tRNA synthetase</fullName>
        <shortName evidence="1">MetRS</shortName>
    </alternativeName>
</protein>
<accession>Q6FE36</accession>
<name>SYM_ACIAD</name>
<organism>
    <name type="scientific">Acinetobacter baylyi (strain ATCC 33305 / BD413 / ADP1)</name>
    <dbReference type="NCBI Taxonomy" id="62977"/>
    <lineage>
        <taxon>Bacteria</taxon>
        <taxon>Pseudomonadati</taxon>
        <taxon>Pseudomonadota</taxon>
        <taxon>Gammaproteobacteria</taxon>
        <taxon>Moraxellales</taxon>
        <taxon>Moraxellaceae</taxon>
        <taxon>Acinetobacter</taxon>
    </lineage>
</organism>
<reference key="1">
    <citation type="journal article" date="2004" name="Nucleic Acids Res.">
        <title>Unique features revealed by the genome sequence of Acinetobacter sp. ADP1, a versatile and naturally transformation competent bacterium.</title>
        <authorList>
            <person name="Barbe V."/>
            <person name="Vallenet D."/>
            <person name="Fonknechten N."/>
            <person name="Kreimeyer A."/>
            <person name="Oztas S."/>
            <person name="Labarre L."/>
            <person name="Cruveiller S."/>
            <person name="Robert C."/>
            <person name="Duprat S."/>
            <person name="Wincker P."/>
            <person name="Ornston L.N."/>
            <person name="Weissenbach J."/>
            <person name="Marliere P."/>
            <person name="Cohen G.N."/>
            <person name="Medigue C."/>
        </authorList>
    </citation>
    <scope>NUCLEOTIDE SEQUENCE [LARGE SCALE GENOMIC DNA]</scope>
    <source>
        <strain>ATCC 33305 / BD413 / ADP1</strain>
    </source>
</reference>
<feature type="chain" id="PRO_0000139096" description="Methionine--tRNA ligase">
    <location>
        <begin position="1"/>
        <end position="685"/>
    </location>
</feature>
<feature type="domain" description="tRNA-binding" evidence="1">
    <location>
        <begin position="584"/>
        <end position="685"/>
    </location>
</feature>
<feature type="short sequence motif" description="'KMSKS' region">
    <location>
        <begin position="330"/>
        <end position="334"/>
    </location>
</feature>
<feature type="binding site" evidence="1">
    <location>
        <position position="142"/>
    </location>
    <ligand>
        <name>Zn(2+)</name>
        <dbReference type="ChEBI" id="CHEBI:29105"/>
    </ligand>
</feature>
<feature type="binding site" evidence="1">
    <location>
        <position position="145"/>
    </location>
    <ligand>
        <name>Zn(2+)</name>
        <dbReference type="ChEBI" id="CHEBI:29105"/>
    </ligand>
</feature>
<feature type="binding site" evidence="1">
    <location>
        <position position="155"/>
    </location>
    <ligand>
        <name>Zn(2+)</name>
        <dbReference type="ChEBI" id="CHEBI:29105"/>
    </ligand>
</feature>
<feature type="binding site" evidence="1">
    <location>
        <position position="158"/>
    </location>
    <ligand>
        <name>Zn(2+)</name>
        <dbReference type="ChEBI" id="CHEBI:29105"/>
    </ligand>
</feature>
<feature type="binding site" evidence="1">
    <location>
        <position position="333"/>
    </location>
    <ligand>
        <name>ATP</name>
        <dbReference type="ChEBI" id="CHEBI:30616"/>
    </ligand>
</feature>
<keyword id="KW-0030">Aminoacyl-tRNA synthetase</keyword>
<keyword id="KW-0067">ATP-binding</keyword>
<keyword id="KW-0963">Cytoplasm</keyword>
<keyword id="KW-0436">Ligase</keyword>
<keyword id="KW-0479">Metal-binding</keyword>
<keyword id="KW-0547">Nucleotide-binding</keyword>
<keyword id="KW-0648">Protein biosynthesis</keyword>
<keyword id="KW-0694">RNA-binding</keyword>
<keyword id="KW-0820">tRNA-binding</keyword>
<keyword id="KW-0862">Zinc</keyword>
<dbReference type="EC" id="6.1.1.10" evidence="1"/>
<dbReference type="EMBL" id="CR543861">
    <property type="protein sequence ID" value="CAG67672.1"/>
    <property type="molecule type" value="Genomic_DNA"/>
</dbReference>
<dbReference type="RefSeq" id="WP_004922425.1">
    <property type="nucleotide sequence ID" value="NC_005966.1"/>
</dbReference>
<dbReference type="SMR" id="Q6FE36"/>
<dbReference type="STRING" id="202950.GCA_001485005_02523"/>
<dbReference type="GeneID" id="45233232"/>
<dbReference type="KEGG" id="aci:ACIAD0768"/>
<dbReference type="eggNOG" id="COG0073">
    <property type="taxonomic scope" value="Bacteria"/>
</dbReference>
<dbReference type="eggNOG" id="COG0143">
    <property type="taxonomic scope" value="Bacteria"/>
</dbReference>
<dbReference type="HOGENOM" id="CLU_009710_7_0_6"/>
<dbReference type="OrthoDB" id="9810191at2"/>
<dbReference type="BioCyc" id="ASP62977:ACIAD_RS03520-MONOMER"/>
<dbReference type="Proteomes" id="UP000000430">
    <property type="component" value="Chromosome"/>
</dbReference>
<dbReference type="GO" id="GO:0005829">
    <property type="term" value="C:cytosol"/>
    <property type="evidence" value="ECO:0007669"/>
    <property type="project" value="TreeGrafter"/>
</dbReference>
<dbReference type="GO" id="GO:0005524">
    <property type="term" value="F:ATP binding"/>
    <property type="evidence" value="ECO:0007669"/>
    <property type="project" value="UniProtKB-UniRule"/>
</dbReference>
<dbReference type="GO" id="GO:0046872">
    <property type="term" value="F:metal ion binding"/>
    <property type="evidence" value="ECO:0007669"/>
    <property type="project" value="UniProtKB-KW"/>
</dbReference>
<dbReference type="GO" id="GO:0004825">
    <property type="term" value="F:methionine-tRNA ligase activity"/>
    <property type="evidence" value="ECO:0007669"/>
    <property type="project" value="UniProtKB-UniRule"/>
</dbReference>
<dbReference type="GO" id="GO:0000049">
    <property type="term" value="F:tRNA binding"/>
    <property type="evidence" value="ECO:0007669"/>
    <property type="project" value="UniProtKB-KW"/>
</dbReference>
<dbReference type="GO" id="GO:0006431">
    <property type="term" value="P:methionyl-tRNA aminoacylation"/>
    <property type="evidence" value="ECO:0007669"/>
    <property type="project" value="UniProtKB-UniRule"/>
</dbReference>
<dbReference type="CDD" id="cd07957">
    <property type="entry name" value="Anticodon_Ia_Met"/>
    <property type="match status" value="1"/>
</dbReference>
<dbReference type="CDD" id="cd00814">
    <property type="entry name" value="MetRS_core"/>
    <property type="match status" value="1"/>
</dbReference>
<dbReference type="CDD" id="cd02800">
    <property type="entry name" value="tRNA_bind_EcMetRS_like"/>
    <property type="match status" value="1"/>
</dbReference>
<dbReference type="FunFam" id="1.10.730.10:FF:000005">
    <property type="entry name" value="Methionine--tRNA ligase"/>
    <property type="match status" value="1"/>
</dbReference>
<dbReference type="FunFam" id="2.20.28.20:FF:000001">
    <property type="entry name" value="Methionine--tRNA ligase"/>
    <property type="match status" value="1"/>
</dbReference>
<dbReference type="FunFam" id="2.40.50.140:FF:000042">
    <property type="entry name" value="Methionine--tRNA ligase"/>
    <property type="match status" value="1"/>
</dbReference>
<dbReference type="Gene3D" id="3.40.50.620">
    <property type="entry name" value="HUPs"/>
    <property type="match status" value="1"/>
</dbReference>
<dbReference type="Gene3D" id="1.10.730.10">
    <property type="entry name" value="Isoleucyl-tRNA Synthetase, Domain 1"/>
    <property type="match status" value="1"/>
</dbReference>
<dbReference type="Gene3D" id="2.20.28.20">
    <property type="entry name" value="Methionyl-tRNA synthetase, Zn-domain"/>
    <property type="match status" value="1"/>
</dbReference>
<dbReference type="Gene3D" id="2.40.50.140">
    <property type="entry name" value="Nucleic acid-binding proteins"/>
    <property type="match status" value="1"/>
</dbReference>
<dbReference type="HAMAP" id="MF_00098">
    <property type="entry name" value="Met_tRNA_synth_type1"/>
    <property type="match status" value="1"/>
</dbReference>
<dbReference type="InterPro" id="IPR001412">
    <property type="entry name" value="aa-tRNA-synth_I_CS"/>
</dbReference>
<dbReference type="InterPro" id="IPR041872">
    <property type="entry name" value="Anticodon_Met"/>
</dbReference>
<dbReference type="InterPro" id="IPR004495">
    <property type="entry name" value="Met-tRNA-synth_bsu_C"/>
</dbReference>
<dbReference type="InterPro" id="IPR023458">
    <property type="entry name" value="Met-tRNA_ligase_1"/>
</dbReference>
<dbReference type="InterPro" id="IPR014758">
    <property type="entry name" value="Met-tRNA_synth"/>
</dbReference>
<dbReference type="InterPro" id="IPR015413">
    <property type="entry name" value="Methionyl/Leucyl_tRNA_Synth"/>
</dbReference>
<dbReference type="InterPro" id="IPR033911">
    <property type="entry name" value="MetRS_core"/>
</dbReference>
<dbReference type="InterPro" id="IPR029038">
    <property type="entry name" value="MetRS_Zn"/>
</dbReference>
<dbReference type="InterPro" id="IPR012340">
    <property type="entry name" value="NA-bd_OB-fold"/>
</dbReference>
<dbReference type="InterPro" id="IPR014729">
    <property type="entry name" value="Rossmann-like_a/b/a_fold"/>
</dbReference>
<dbReference type="InterPro" id="IPR002547">
    <property type="entry name" value="tRNA-bd_dom"/>
</dbReference>
<dbReference type="InterPro" id="IPR009080">
    <property type="entry name" value="tRNAsynth_Ia_anticodon-bd"/>
</dbReference>
<dbReference type="NCBIfam" id="TIGR00398">
    <property type="entry name" value="metG"/>
    <property type="match status" value="1"/>
</dbReference>
<dbReference type="NCBIfam" id="TIGR00399">
    <property type="entry name" value="metG_C_term"/>
    <property type="match status" value="1"/>
</dbReference>
<dbReference type="NCBIfam" id="NF001100">
    <property type="entry name" value="PRK00133.1"/>
    <property type="match status" value="1"/>
</dbReference>
<dbReference type="PANTHER" id="PTHR45765">
    <property type="entry name" value="METHIONINE--TRNA LIGASE"/>
    <property type="match status" value="1"/>
</dbReference>
<dbReference type="PANTHER" id="PTHR45765:SF1">
    <property type="entry name" value="METHIONINE--TRNA LIGASE, CYTOPLASMIC"/>
    <property type="match status" value="1"/>
</dbReference>
<dbReference type="Pfam" id="PF19303">
    <property type="entry name" value="Anticodon_3"/>
    <property type="match status" value="1"/>
</dbReference>
<dbReference type="Pfam" id="PF09334">
    <property type="entry name" value="tRNA-synt_1g"/>
    <property type="match status" value="1"/>
</dbReference>
<dbReference type="Pfam" id="PF01588">
    <property type="entry name" value="tRNA_bind"/>
    <property type="match status" value="1"/>
</dbReference>
<dbReference type="PRINTS" id="PR01041">
    <property type="entry name" value="TRNASYNTHMET"/>
</dbReference>
<dbReference type="SUPFAM" id="SSF47323">
    <property type="entry name" value="Anticodon-binding domain of a subclass of class I aminoacyl-tRNA synthetases"/>
    <property type="match status" value="1"/>
</dbReference>
<dbReference type="SUPFAM" id="SSF57770">
    <property type="entry name" value="Methionyl-tRNA synthetase (MetRS), Zn-domain"/>
    <property type="match status" value="1"/>
</dbReference>
<dbReference type="SUPFAM" id="SSF50249">
    <property type="entry name" value="Nucleic acid-binding proteins"/>
    <property type="match status" value="1"/>
</dbReference>
<dbReference type="SUPFAM" id="SSF52374">
    <property type="entry name" value="Nucleotidylyl transferase"/>
    <property type="match status" value="1"/>
</dbReference>
<dbReference type="PROSITE" id="PS00178">
    <property type="entry name" value="AA_TRNA_LIGASE_I"/>
    <property type="match status" value="1"/>
</dbReference>
<dbReference type="PROSITE" id="PS50886">
    <property type="entry name" value="TRBD"/>
    <property type="match status" value="1"/>
</dbReference>